<sequence>MHVSIFAVGRMKKGAEQALVHHYLDRFSKSCSAVGFHFKILQEISESRAPTACQRMEEEGRRLIEFLPEKCRLIVLDERGKTVSSFAFAEQLGFYRDEGVRDVIIALGGPDGHNEQIRNRADFLLSFGFMTWPHQIARILLTEQLYRAVTIASNHPYHRF</sequence>
<comment type="function">
    <text evidence="1">Specifically methylates the pseudouridine at position 1915 (m3Psi1915) in 23S rRNA.</text>
</comment>
<comment type="catalytic activity">
    <reaction evidence="1">
        <text>pseudouridine(1915) in 23S rRNA + S-adenosyl-L-methionine = N(3)-methylpseudouridine(1915) in 23S rRNA + S-adenosyl-L-homocysteine + H(+)</text>
        <dbReference type="Rhea" id="RHEA:42752"/>
        <dbReference type="Rhea" id="RHEA-COMP:10221"/>
        <dbReference type="Rhea" id="RHEA-COMP:10222"/>
        <dbReference type="ChEBI" id="CHEBI:15378"/>
        <dbReference type="ChEBI" id="CHEBI:57856"/>
        <dbReference type="ChEBI" id="CHEBI:59789"/>
        <dbReference type="ChEBI" id="CHEBI:65314"/>
        <dbReference type="ChEBI" id="CHEBI:74486"/>
        <dbReference type="EC" id="2.1.1.177"/>
    </reaction>
</comment>
<comment type="subunit">
    <text evidence="1">Homodimer.</text>
</comment>
<comment type="subcellular location">
    <subcellularLocation>
        <location evidence="1">Cytoplasm</location>
    </subcellularLocation>
</comment>
<comment type="similarity">
    <text evidence="1">Belongs to the RNA methyltransferase RlmH family.</text>
</comment>
<evidence type="ECO:0000255" key="1">
    <source>
        <dbReference type="HAMAP-Rule" id="MF_00658"/>
    </source>
</evidence>
<name>RLMH_BARHE</name>
<keyword id="KW-0963">Cytoplasm</keyword>
<keyword id="KW-0489">Methyltransferase</keyword>
<keyword id="KW-0698">rRNA processing</keyword>
<keyword id="KW-0949">S-adenosyl-L-methionine</keyword>
<keyword id="KW-0808">Transferase</keyword>
<proteinExistence type="inferred from homology"/>
<accession>Q6G4Y7</accession>
<gene>
    <name evidence="1" type="primary">rlmH</name>
    <name type="ordered locus">BH01610</name>
</gene>
<feature type="chain" id="PRO_0000198092" description="Ribosomal RNA large subunit methyltransferase H">
    <location>
        <begin position="1"/>
        <end position="160"/>
    </location>
</feature>
<feature type="binding site" evidence="1">
    <location>
        <position position="76"/>
    </location>
    <ligand>
        <name>S-adenosyl-L-methionine</name>
        <dbReference type="ChEBI" id="CHEBI:59789"/>
    </ligand>
</feature>
<feature type="binding site" evidence="1">
    <location>
        <position position="108"/>
    </location>
    <ligand>
        <name>S-adenosyl-L-methionine</name>
        <dbReference type="ChEBI" id="CHEBI:59789"/>
    </ligand>
</feature>
<feature type="binding site" evidence="1">
    <location>
        <begin position="127"/>
        <end position="132"/>
    </location>
    <ligand>
        <name>S-adenosyl-L-methionine</name>
        <dbReference type="ChEBI" id="CHEBI:59789"/>
    </ligand>
</feature>
<dbReference type="EC" id="2.1.1.177" evidence="1"/>
<dbReference type="EMBL" id="BX897699">
    <property type="protein sequence ID" value="CAF26973.1"/>
    <property type="molecule type" value="Genomic_DNA"/>
</dbReference>
<dbReference type="RefSeq" id="WP_011180114.1">
    <property type="nucleotide sequence ID" value="NZ_LRIJ02000001.1"/>
</dbReference>
<dbReference type="SMR" id="Q6G4Y7"/>
<dbReference type="PaxDb" id="283166-BH01610"/>
<dbReference type="EnsemblBacteria" id="CAF26973">
    <property type="protein sequence ID" value="CAF26973"/>
    <property type="gene ID" value="BH01610"/>
</dbReference>
<dbReference type="GeneID" id="92984829"/>
<dbReference type="KEGG" id="bhe:BH01610"/>
<dbReference type="eggNOG" id="COG1576">
    <property type="taxonomic scope" value="Bacteria"/>
</dbReference>
<dbReference type="OrthoDB" id="9806643at2"/>
<dbReference type="Proteomes" id="UP000000421">
    <property type="component" value="Chromosome"/>
</dbReference>
<dbReference type="GO" id="GO:0005737">
    <property type="term" value="C:cytoplasm"/>
    <property type="evidence" value="ECO:0007669"/>
    <property type="project" value="UniProtKB-SubCell"/>
</dbReference>
<dbReference type="GO" id="GO:0070038">
    <property type="term" value="F:rRNA (pseudouridine-N3-)-methyltransferase activity"/>
    <property type="evidence" value="ECO:0007669"/>
    <property type="project" value="UniProtKB-UniRule"/>
</dbReference>
<dbReference type="CDD" id="cd18081">
    <property type="entry name" value="RlmH-like"/>
    <property type="match status" value="1"/>
</dbReference>
<dbReference type="Gene3D" id="3.40.1280.10">
    <property type="match status" value="1"/>
</dbReference>
<dbReference type="HAMAP" id="MF_00658">
    <property type="entry name" value="23SrRNA_methyltr_H"/>
    <property type="match status" value="1"/>
</dbReference>
<dbReference type="InterPro" id="IPR029028">
    <property type="entry name" value="Alpha/beta_knot_MTases"/>
</dbReference>
<dbReference type="InterPro" id="IPR003742">
    <property type="entry name" value="RlmH-like"/>
</dbReference>
<dbReference type="InterPro" id="IPR029026">
    <property type="entry name" value="tRNA_m1G_MTases_N"/>
</dbReference>
<dbReference type="NCBIfam" id="NF000989">
    <property type="entry name" value="PRK00103.2-3"/>
    <property type="match status" value="1"/>
</dbReference>
<dbReference type="PANTHER" id="PTHR33603">
    <property type="entry name" value="METHYLTRANSFERASE"/>
    <property type="match status" value="1"/>
</dbReference>
<dbReference type="PANTHER" id="PTHR33603:SF1">
    <property type="entry name" value="RIBOSOMAL RNA LARGE SUBUNIT METHYLTRANSFERASE H"/>
    <property type="match status" value="1"/>
</dbReference>
<dbReference type="Pfam" id="PF02590">
    <property type="entry name" value="SPOUT_MTase"/>
    <property type="match status" value="1"/>
</dbReference>
<dbReference type="PIRSF" id="PIRSF004505">
    <property type="entry name" value="MT_bac"/>
    <property type="match status" value="1"/>
</dbReference>
<dbReference type="SUPFAM" id="SSF75217">
    <property type="entry name" value="alpha/beta knot"/>
    <property type="match status" value="1"/>
</dbReference>
<organism>
    <name type="scientific">Bartonella henselae (strain ATCC 49882 / DSM 28221 / CCUG 30454 / Houston 1)</name>
    <name type="common">Rochalimaea henselae</name>
    <dbReference type="NCBI Taxonomy" id="283166"/>
    <lineage>
        <taxon>Bacteria</taxon>
        <taxon>Pseudomonadati</taxon>
        <taxon>Pseudomonadota</taxon>
        <taxon>Alphaproteobacteria</taxon>
        <taxon>Hyphomicrobiales</taxon>
        <taxon>Bartonellaceae</taxon>
        <taxon>Bartonella</taxon>
    </lineage>
</organism>
<protein>
    <recommendedName>
        <fullName evidence="1">Ribosomal RNA large subunit methyltransferase H</fullName>
        <ecNumber evidence="1">2.1.1.177</ecNumber>
    </recommendedName>
    <alternativeName>
        <fullName evidence="1">23S rRNA (pseudouridine1915-N3)-methyltransferase</fullName>
    </alternativeName>
    <alternativeName>
        <fullName evidence="1">23S rRNA m3Psi1915 methyltransferase</fullName>
    </alternativeName>
    <alternativeName>
        <fullName evidence="1">rRNA (pseudouridine-N3-)-methyltransferase RlmH</fullName>
    </alternativeName>
</protein>
<reference key="1">
    <citation type="journal article" date="2004" name="Proc. Natl. Acad. Sci. U.S.A.">
        <title>The louse-borne human pathogen Bartonella quintana is a genomic derivative of the zoonotic agent Bartonella henselae.</title>
        <authorList>
            <person name="Alsmark U.C.M."/>
            <person name="Frank A.C."/>
            <person name="Karlberg E.O."/>
            <person name="Legault B.-A."/>
            <person name="Ardell D.H."/>
            <person name="Canbaeck B."/>
            <person name="Eriksson A.-S."/>
            <person name="Naeslund A.K."/>
            <person name="Handley S.A."/>
            <person name="Huvet M."/>
            <person name="La Scola B."/>
            <person name="Holmberg M."/>
            <person name="Andersson S.G.E."/>
        </authorList>
    </citation>
    <scope>NUCLEOTIDE SEQUENCE [LARGE SCALE GENOMIC DNA]</scope>
    <source>
        <strain>ATCC 49882 / DSM 28221 / CCUG 30454 / Houston 1</strain>
    </source>
</reference>